<gene>
    <name evidence="6" type="primary">ATP5MG</name>
    <name type="synonym">ATP5L</name>
</gene>
<evidence type="ECO:0000250" key="1">
    <source>
        <dbReference type="UniProtKB" id="P19483"/>
    </source>
</evidence>
<evidence type="ECO:0000250" key="2">
    <source>
        <dbReference type="UniProtKB" id="Q9CPQ8"/>
    </source>
</evidence>
<evidence type="ECO:0000269" key="3">
    <source>
    </source>
</evidence>
<evidence type="ECO:0000305" key="4"/>
<evidence type="ECO:0000305" key="5">
    <source>
    </source>
</evidence>
<evidence type="ECO:0000312" key="6">
    <source>
        <dbReference type="HGNC" id="HGNC:14247"/>
    </source>
</evidence>
<evidence type="ECO:0007744" key="7">
    <source>
        <dbReference type="PDB" id="8H9F"/>
    </source>
</evidence>
<evidence type="ECO:0007744" key="8">
    <source>
        <dbReference type="PDB" id="8H9J"/>
    </source>
</evidence>
<evidence type="ECO:0007744" key="9">
    <source>
        <dbReference type="PDB" id="8H9M"/>
    </source>
</evidence>
<evidence type="ECO:0007744" key="10">
    <source>
        <dbReference type="PDB" id="8H9Q"/>
    </source>
</evidence>
<evidence type="ECO:0007744" key="11">
    <source>
        <dbReference type="PDB" id="8H9S"/>
    </source>
</evidence>
<evidence type="ECO:0007744" key="12">
    <source>
        <dbReference type="PDB" id="8H9T"/>
    </source>
</evidence>
<evidence type="ECO:0007744" key="13">
    <source>
        <dbReference type="PDB" id="8H9U"/>
    </source>
</evidence>
<evidence type="ECO:0007744" key="14">
    <source>
        <dbReference type="PDB" id="8H9V"/>
    </source>
</evidence>
<evidence type="ECO:0007744" key="15">
    <source>
    </source>
</evidence>
<evidence type="ECO:0007744" key="16">
    <source>
    </source>
</evidence>
<evidence type="ECO:0007829" key="17">
    <source>
        <dbReference type="PDB" id="8H9M"/>
    </source>
</evidence>
<evidence type="ECO:0007829" key="18">
    <source>
        <dbReference type="PDB" id="8KHF"/>
    </source>
</evidence>
<name>ATP5L_HUMAN</name>
<keyword id="KW-0002">3D-structure</keyword>
<keyword id="KW-0007">Acetylation</keyword>
<keyword id="KW-0066">ATP synthesis</keyword>
<keyword id="KW-0138">CF(0)</keyword>
<keyword id="KW-0375">Hydrogen ion transport</keyword>
<keyword id="KW-0406">Ion transport</keyword>
<keyword id="KW-0472">Membrane</keyword>
<keyword id="KW-0496">Mitochondrion</keyword>
<keyword id="KW-0999">Mitochondrion inner membrane</keyword>
<keyword id="KW-1267">Proteomics identification</keyword>
<keyword id="KW-1185">Reference proteome</keyword>
<keyword id="KW-0813">Transport</keyword>
<protein>
    <recommendedName>
        <fullName evidence="4">ATP synthase F(0) complex subunit g, mitochondrial</fullName>
        <shortName>ATPase subunit g</shortName>
    </recommendedName>
    <alternativeName>
        <fullName evidence="4">ATP synthase membrane subunit g</fullName>
    </alternativeName>
</protein>
<organism>
    <name type="scientific">Homo sapiens</name>
    <name type="common">Human</name>
    <dbReference type="NCBI Taxonomy" id="9606"/>
    <lineage>
        <taxon>Eukaryota</taxon>
        <taxon>Metazoa</taxon>
        <taxon>Chordata</taxon>
        <taxon>Craniata</taxon>
        <taxon>Vertebrata</taxon>
        <taxon>Euteleostomi</taxon>
        <taxon>Mammalia</taxon>
        <taxon>Eutheria</taxon>
        <taxon>Euarchontoglires</taxon>
        <taxon>Primates</taxon>
        <taxon>Haplorrhini</taxon>
        <taxon>Catarrhini</taxon>
        <taxon>Hominidae</taxon>
        <taxon>Homo</taxon>
    </lineage>
</organism>
<feature type="initiator methionine" description="Removed" evidence="15">
    <location>
        <position position="1"/>
    </location>
</feature>
<feature type="chain" id="PRO_0000071691" description="ATP synthase F(0) complex subunit g, mitochondrial">
    <location>
        <begin position="2"/>
        <end position="103"/>
    </location>
</feature>
<feature type="modified residue" description="N-acetylalanine" evidence="15">
    <location>
        <position position="2"/>
    </location>
</feature>
<feature type="modified residue" description="N6-acetyllysine" evidence="2">
    <location>
        <position position="11"/>
    </location>
</feature>
<feature type="modified residue" description="N6-acetyllysine" evidence="16">
    <location>
        <position position="24"/>
    </location>
</feature>
<feature type="modified residue" description="N6-acetyllysine" evidence="2">
    <location>
        <position position="35"/>
    </location>
</feature>
<feature type="modified residue" description="N6-acetyllysine" evidence="2">
    <location>
        <position position="54"/>
    </location>
</feature>
<feature type="sequence conflict" description="In Ref. 1; AAC61597." evidence="4" ref="1">
    <original>A</original>
    <variation>G</variation>
    <location>
        <position position="2"/>
    </location>
</feature>
<feature type="sequence conflict" description="In Ref. 1; AAC61597." evidence="4" ref="1">
    <original>R</original>
    <variation>K</variation>
    <location>
        <position position="48"/>
    </location>
</feature>
<feature type="sequence conflict" description="In Ref. 8; AAH15128." evidence="4" ref="8">
    <original>V</original>
    <variation>A</variation>
    <location>
        <position position="57"/>
    </location>
</feature>
<feature type="helix" evidence="17">
    <location>
        <begin position="29"/>
        <end position="37"/>
    </location>
</feature>
<feature type="helix" evidence="18">
    <location>
        <begin position="43"/>
        <end position="45"/>
    </location>
</feature>
<feature type="helix" evidence="17">
    <location>
        <begin position="46"/>
        <end position="62"/>
    </location>
</feature>
<feature type="helix" evidence="17">
    <location>
        <begin position="64"/>
        <end position="66"/>
    </location>
</feature>
<feature type="helix" evidence="17">
    <location>
        <begin position="70"/>
        <end position="94"/>
    </location>
</feature>
<feature type="strand" evidence="17">
    <location>
        <begin position="98"/>
        <end position="100"/>
    </location>
</feature>
<reference key="1">
    <citation type="submission" date="1998-09" db="EMBL/GenBank/DDBJ databases">
        <title>Molecular cloning and chromosomal assignment of F1F0-type ATP synthase subunit g from human infant thymus.</title>
        <authorList>
            <person name="Kang Y.J."/>
            <person name="Hwang M.Y."/>
            <person name="Lee M.Y."/>
            <person name="Lee H.C."/>
            <person name="Sohn U."/>
        </authorList>
    </citation>
    <scope>NUCLEOTIDE SEQUENCE [MRNA]</scope>
    <source>
        <tissue>Thymus</tissue>
    </source>
</reference>
<reference key="2">
    <citation type="submission" date="1998-08" db="EMBL/GenBank/DDBJ databases">
        <title>Cloning and characterization of a novel human cDNA homologous to Bos taurus F1Fo-ATP synthase complex Fo membrane domain g subunit mRNA.</title>
        <authorList>
            <person name="Zhang M."/>
            <person name="Yu L."/>
            <person name="Zhou Y."/>
            <person name="Hu P.R."/>
            <person name="Xin Y.R."/>
            <person name="Zhao S.Y."/>
        </authorList>
    </citation>
    <scope>NUCLEOTIDE SEQUENCE [MRNA]</scope>
</reference>
<reference key="3">
    <citation type="journal article" date="2000" name="Genome Res.">
        <title>Cloning and functional analysis of cDNAs with open reading frames for 300 previously undefined genes expressed in CD34+ hematopoietic stem/progenitor cells.</title>
        <authorList>
            <person name="Zhang Q.-H."/>
            <person name="Ye M."/>
            <person name="Wu X.-Y."/>
            <person name="Ren S.-X."/>
            <person name="Zhao M."/>
            <person name="Zhao C.-J."/>
            <person name="Fu G."/>
            <person name="Shen Y."/>
            <person name="Fan H.-Y."/>
            <person name="Lu G."/>
            <person name="Zhong M."/>
            <person name="Xu X.-R."/>
            <person name="Han Z.-G."/>
            <person name="Zhang J.-W."/>
            <person name="Tao J."/>
            <person name="Huang Q.-H."/>
            <person name="Zhou J."/>
            <person name="Hu G.-X."/>
            <person name="Gu J."/>
            <person name="Chen S.-J."/>
            <person name="Chen Z."/>
        </authorList>
    </citation>
    <scope>NUCLEOTIDE SEQUENCE [LARGE SCALE MRNA]</scope>
    <source>
        <tissue>Umbilical cord blood</tissue>
    </source>
</reference>
<reference key="4">
    <citation type="journal article" date="2001" name="Genome Res.">
        <title>Towards a catalog of human genes and proteins: sequencing and analysis of 500 novel complete protein coding human cDNAs.</title>
        <authorList>
            <person name="Wiemann S."/>
            <person name="Weil B."/>
            <person name="Wellenreuther R."/>
            <person name="Gassenhuber J."/>
            <person name="Glassl S."/>
            <person name="Ansorge W."/>
            <person name="Boecher M."/>
            <person name="Bloecker H."/>
            <person name="Bauersachs S."/>
            <person name="Blum H."/>
            <person name="Lauber J."/>
            <person name="Duesterhoeft A."/>
            <person name="Beyer A."/>
            <person name="Koehrer K."/>
            <person name="Strack N."/>
            <person name="Mewes H.-W."/>
            <person name="Ottenwaelder B."/>
            <person name="Obermaier B."/>
            <person name="Tampe J."/>
            <person name="Heubner D."/>
            <person name="Wambutt R."/>
            <person name="Korn B."/>
            <person name="Klein M."/>
            <person name="Poustka A."/>
        </authorList>
    </citation>
    <scope>NUCLEOTIDE SEQUENCE [LARGE SCALE MRNA]</scope>
    <source>
        <tissue>Kidney</tissue>
    </source>
</reference>
<reference key="5">
    <citation type="submission" date="2004-06" db="EMBL/GenBank/DDBJ databases">
        <title>Cloning of human full open reading frames in Gateway(TM) system entry vector (pDONR201).</title>
        <authorList>
            <person name="Halleck A."/>
            <person name="Ebert L."/>
            <person name="Mkoundinya M."/>
            <person name="Schick M."/>
            <person name="Eisenstein S."/>
            <person name="Neubert P."/>
            <person name="Kstrang K."/>
            <person name="Schatten R."/>
            <person name="Shen B."/>
            <person name="Henze S."/>
            <person name="Mar W."/>
            <person name="Korn B."/>
            <person name="Zuo D."/>
            <person name="Hu Y."/>
            <person name="LaBaer J."/>
        </authorList>
    </citation>
    <scope>NUCLEOTIDE SEQUENCE [LARGE SCALE MRNA]</scope>
</reference>
<reference key="6">
    <citation type="journal article" date="2004" name="Nat. Genet.">
        <title>Complete sequencing and characterization of 21,243 full-length human cDNAs.</title>
        <authorList>
            <person name="Ota T."/>
            <person name="Suzuki Y."/>
            <person name="Nishikawa T."/>
            <person name="Otsuki T."/>
            <person name="Sugiyama T."/>
            <person name="Irie R."/>
            <person name="Wakamatsu A."/>
            <person name="Hayashi K."/>
            <person name="Sato H."/>
            <person name="Nagai K."/>
            <person name="Kimura K."/>
            <person name="Makita H."/>
            <person name="Sekine M."/>
            <person name="Obayashi M."/>
            <person name="Nishi T."/>
            <person name="Shibahara T."/>
            <person name="Tanaka T."/>
            <person name="Ishii S."/>
            <person name="Yamamoto J."/>
            <person name="Saito K."/>
            <person name="Kawai Y."/>
            <person name="Isono Y."/>
            <person name="Nakamura Y."/>
            <person name="Nagahari K."/>
            <person name="Murakami K."/>
            <person name="Yasuda T."/>
            <person name="Iwayanagi T."/>
            <person name="Wagatsuma M."/>
            <person name="Shiratori A."/>
            <person name="Sudo H."/>
            <person name="Hosoiri T."/>
            <person name="Kaku Y."/>
            <person name="Kodaira H."/>
            <person name="Kondo H."/>
            <person name="Sugawara M."/>
            <person name="Takahashi M."/>
            <person name="Kanda K."/>
            <person name="Yokoi T."/>
            <person name="Furuya T."/>
            <person name="Kikkawa E."/>
            <person name="Omura Y."/>
            <person name="Abe K."/>
            <person name="Kamihara K."/>
            <person name="Katsuta N."/>
            <person name="Sato K."/>
            <person name="Tanikawa M."/>
            <person name="Yamazaki M."/>
            <person name="Ninomiya K."/>
            <person name="Ishibashi T."/>
            <person name="Yamashita H."/>
            <person name="Murakawa K."/>
            <person name="Fujimori K."/>
            <person name="Tanai H."/>
            <person name="Kimata M."/>
            <person name="Watanabe M."/>
            <person name="Hiraoka S."/>
            <person name="Chiba Y."/>
            <person name="Ishida S."/>
            <person name="Ono Y."/>
            <person name="Takiguchi S."/>
            <person name="Watanabe S."/>
            <person name="Yosida M."/>
            <person name="Hotuta T."/>
            <person name="Kusano J."/>
            <person name="Kanehori K."/>
            <person name="Takahashi-Fujii A."/>
            <person name="Hara H."/>
            <person name="Tanase T.-O."/>
            <person name="Nomura Y."/>
            <person name="Togiya S."/>
            <person name="Komai F."/>
            <person name="Hara R."/>
            <person name="Takeuchi K."/>
            <person name="Arita M."/>
            <person name="Imose N."/>
            <person name="Musashino K."/>
            <person name="Yuuki H."/>
            <person name="Oshima A."/>
            <person name="Sasaki N."/>
            <person name="Aotsuka S."/>
            <person name="Yoshikawa Y."/>
            <person name="Matsunawa H."/>
            <person name="Ichihara T."/>
            <person name="Shiohata N."/>
            <person name="Sano S."/>
            <person name="Moriya S."/>
            <person name="Momiyama H."/>
            <person name="Satoh N."/>
            <person name="Takami S."/>
            <person name="Terashima Y."/>
            <person name="Suzuki O."/>
            <person name="Nakagawa S."/>
            <person name="Senoh A."/>
            <person name="Mizoguchi H."/>
            <person name="Goto Y."/>
            <person name="Shimizu F."/>
            <person name="Wakebe H."/>
            <person name="Hishigaki H."/>
            <person name="Watanabe T."/>
            <person name="Sugiyama A."/>
            <person name="Takemoto M."/>
            <person name="Kawakami B."/>
            <person name="Yamazaki M."/>
            <person name="Watanabe K."/>
            <person name="Kumagai A."/>
            <person name="Itakura S."/>
            <person name="Fukuzumi Y."/>
            <person name="Fujimori Y."/>
            <person name="Komiyama M."/>
            <person name="Tashiro H."/>
            <person name="Tanigami A."/>
            <person name="Fujiwara T."/>
            <person name="Ono T."/>
            <person name="Yamada K."/>
            <person name="Fujii Y."/>
            <person name="Ozaki K."/>
            <person name="Hirao M."/>
            <person name="Ohmori Y."/>
            <person name="Kawabata A."/>
            <person name="Hikiji T."/>
            <person name="Kobatake N."/>
            <person name="Inagaki H."/>
            <person name="Ikema Y."/>
            <person name="Okamoto S."/>
            <person name="Okitani R."/>
            <person name="Kawakami T."/>
            <person name="Noguchi S."/>
            <person name="Itoh T."/>
            <person name="Shigeta K."/>
            <person name="Senba T."/>
            <person name="Matsumura K."/>
            <person name="Nakajima Y."/>
            <person name="Mizuno T."/>
            <person name="Morinaga M."/>
            <person name="Sasaki M."/>
            <person name="Togashi T."/>
            <person name="Oyama M."/>
            <person name="Hata H."/>
            <person name="Watanabe M."/>
            <person name="Komatsu T."/>
            <person name="Mizushima-Sugano J."/>
            <person name="Satoh T."/>
            <person name="Shirai Y."/>
            <person name="Takahashi Y."/>
            <person name="Nakagawa K."/>
            <person name="Okumura K."/>
            <person name="Nagase T."/>
            <person name="Nomura N."/>
            <person name="Kikuchi H."/>
            <person name="Masuho Y."/>
            <person name="Yamashita R."/>
            <person name="Nakai K."/>
            <person name="Yada T."/>
            <person name="Nakamura Y."/>
            <person name="Ohara O."/>
            <person name="Isogai T."/>
            <person name="Sugano S."/>
        </authorList>
    </citation>
    <scope>NUCLEOTIDE SEQUENCE [LARGE SCALE MRNA]</scope>
    <source>
        <tissue>Cerebellum</tissue>
    </source>
</reference>
<reference key="7">
    <citation type="submission" date="2005-07" db="EMBL/GenBank/DDBJ databases">
        <authorList>
            <person name="Mural R.J."/>
            <person name="Istrail S."/>
            <person name="Sutton G.G."/>
            <person name="Florea L."/>
            <person name="Halpern A.L."/>
            <person name="Mobarry C.M."/>
            <person name="Lippert R."/>
            <person name="Walenz B."/>
            <person name="Shatkay H."/>
            <person name="Dew I."/>
            <person name="Miller J.R."/>
            <person name="Flanigan M.J."/>
            <person name="Edwards N.J."/>
            <person name="Bolanos R."/>
            <person name="Fasulo D."/>
            <person name="Halldorsson B.V."/>
            <person name="Hannenhalli S."/>
            <person name="Turner R."/>
            <person name="Yooseph S."/>
            <person name="Lu F."/>
            <person name="Nusskern D.R."/>
            <person name="Shue B.C."/>
            <person name="Zheng X.H."/>
            <person name="Zhong F."/>
            <person name="Delcher A.L."/>
            <person name="Huson D.H."/>
            <person name="Kravitz S.A."/>
            <person name="Mouchard L."/>
            <person name="Reinert K."/>
            <person name="Remington K.A."/>
            <person name="Clark A.G."/>
            <person name="Waterman M.S."/>
            <person name="Eichler E.E."/>
            <person name="Adams M.D."/>
            <person name="Hunkapiller M.W."/>
            <person name="Myers E.W."/>
            <person name="Venter J.C."/>
        </authorList>
    </citation>
    <scope>NUCLEOTIDE SEQUENCE [LARGE SCALE GENOMIC DNA]</scope>
</reference>
<reference key="8">
    <citation type="journal article" date="2004" name="Genome Res.">
        <title>The status, quality, and expansion of the NIH full-length cDNA project: the Mammalian Gene Collection (MGC).</title>
        <authorList>
            <consortium name="The MGC Project Team"/>
        </authorList>
    </citation>
    <scope>NUCLEOTIDE SEQUENCE [LARGE SCALE MRNA]</scope>
    <source>
        <tissue>Lung</tissue>
    </source>
</reference>
<reference key="9">
    <citation type="journal article" date="2009" name="Anal. Chem.">
        <title>Lys-N and trypsin cover complementary parts of the phosphoproteome in a refined SCX-based approach.</title>
        <authorList>
            <person name="Gauci S."/>
            <person name="Helbig A.O."/>
            <person name="Slijper M."/>
            <person name="Krijgsveld J."/>
            <person name="Heck A.J."/>
            <person name="Mohammed S."/>
        </authorList>
    </citation>
    <scope>ACETYLATION [LARGE SCALE ANALYSIS] AT ALA-2</scope>
    <scope>CLEAVAGE OF INITIATOR METHIONINE [LARGE SCALE ANALYSIS]</scope>
    <scope>IDENTIFICATION BY MASS SPECTROMETRY [LARGE SCALE ANALYSIS]</scope>
</reference>
<reference key="10">
    <citation type="journal article" date="2009" name="Science">
        <title>Lysine acetylation targets protein complexes and co-regulates major cellular functions.</title>
        <authorList>
            <person name="Choudhary C."/>
            <person name="Kumar C."/>
            <person name="Gnad F."/>
            <person name="Nielsen M.L."/>
            <person name="Rehman M."/>
            <person name="Walther T.C."/>
            <person name="Olsen J.V."/>
            <person name="Mann M."/>
        </authorList>
    </citation>
    <scope>ACETYLATION [LARGE SCALE ANALYSIS] AT LYS-24</scope>
    <scope>IDENTIFICATION BY MASS SPECTROMETRY [LARGE SCALE ANALYSIS]</scope>
</reference>
<reference key="11">
    <citation type="journal article" date="2011" name="BMC Syst. Biol.">
        <title>Initial characterization of the human central proteome.</title>
        <authorList>
            <person name="Burkard T.R."/>
            <person name="Planyavsky M."/>
            <person name="Kaupe I."/>
            <person name="Breitwieser F.P."/>
            <person name="Buerckstuemmer T."/>
            <person name="Bennett K.L."/>
            <person name="Superti-Furga G."/>
            <person name="Colinge J."/>
        </authorList>
    </citation>
    <scope>IDENTIFICATION BY MASS SPECTROMETRY [LARGE SCALE ANALYSIS]</scope>
</reference>
<reference key="12">
    <citation type="journal article" date="2014" name="J. Proteomics">
        <title>An enzyme assisted RP-RPLC approach for in-depth analysis of human liver phosphoproteome.</title>
        <authorList>
            <person name="Bian Y."/>
            <person name="Song C."/>
            <person name="Cheng K."/>
            <person name="Dong M."/>
            <person name="Wang F."/>
            <person name="Huang J."/>
            <person name="Sun D."/>
            <person name="Wang L."/>
            <person name="Ye M."/>
            <person name="Zou H."/>
        </authorList>
    </citation>
    <scope>IDENTIFICATION BY MASS SPECTROMETRY [LARGE SCALE ANALYSIS]</scope>
    <source>
        <tissue>Liver</tissue>
    </source>
</reference>
<reference key="13">
    <citation type="journal article" date="2015" name="Proteomics">
        <title>N-terminome analysis of the human mitochondrial proteome.</title>
        <authorList>
            <person name="Vaca Jacome A.S."/>
            <person name="Rabilloud T."/>
            <person name="Schaeffer-Reiss C."/>
            <person name="Rompais M."/>
            <person name="Ayoub D."/>
            <person name="Lane L."/>
            <person name="Bairoch A."/>
            <person name="Van Dorsselaer A."/>
            <person name="Carapito C."/>
        </authorList>
    </citation>
    <scope>IDENTIFICATION BY MASS SPECTROMETRY [LARGE SCALE ANALYSIS]</scope>
</reference>
<reference evidence="7 8 9 10 11 12 13 14" key="14">
    <citation type="journal article" date="2023" name="Mol. Cell">
        <title>Structure of the human ATP synthase.</title>
        <authorList>
            <person name="Lai Y."/>
            <person name="Zhang Y."/>
            <person name="Zhou S."/>
            <person name="Xu J."/>
            <person name="Du Z."/>
            <person name="Feng Z."/>
            <person name="Yu L."/>
            <person name="Zhao Z."/>
            <person name="Wang W."/>
            <person name="Tang Y."/>
            <person name="Yang X."/>
            <person name="Guddat L.W."/>
            <person name="Liu F."/>
            <person name="Gao Y."/>
            <person name="Rao Z."/>
            <person name="Gong H."/>
        </authorList>
    </citation>
    <scope>STRUCTURE BY ELECTRON MICROSCOPY (2.53 ANGSTROMS) OF 2-103</scope>
    <scope>IDENTIFICATION IN THE ATP SYNTHASE COMPLEX</scope>
    <scope>FUNCTION</scope>
    <scope>SUBUNIT</scope>
</reference>
<proteinExistence type="evidence at protein level"/>
<sequence length="103" mass="11428">MAQFVRNLVEKTPALVNAAVTYSKPRLATFWYYAKVELVPPTPAEIPRAIQSLKKIVNSAQTGSFKQLTVKEAVLNGLVATEVLMWFYVGEIIGKRGIIGYDV</sequence>
<accession>O75964</accession>
<accession>A8K0K3</accession>
<accession>Q96BV6</accession>
<accession>Q9UBZ7</accession>
<dbReference type="EMBL" id="AF092124">
    <property type="protein sequence ID" value="AAC61597.1"/>
    <property type="molecule type" value="mRNA"/>
</dbReference>
<dbReference type="EMBL" id="AF087846">
    <property type="protein sequence ID" value="AAP97159.1"/>
    <property type="molecule type" value="mRNA"/>
</dbReference>
<dbReference type="EMBL" id="AF070655">
    <property type="protein sequence ID" value="AAD20961.1"/>
    <property type="molecule type" value="mRNA"/>
</dbReference>
<dbReference type="EMBL" id="AL050277">
    <property type="protein sequence ID" value="CAB43378.1"/>
    <property type="molecule type" value="mRNA"/>
</dbReference>
<dbReference type="EMBL" id="CR533494">
    <property type="protein sequence ID" value="CAG38525.1"/>
    <property type="molecule type" value="mRNA"/>
</dbReference>
<dbReference type="EMBL" id="CR542211">
    <property type="protein sequence ID" value="CAG47007.1"/>
    <property type="molecule type" value="mRNA"/>
</dbReference>
<dbReference type="EMBL" id="AK289568">
    <property type="protein sequence ID" value="BAF82257.1"/>
    <property type="molecule type" value="mRNA"/>
</dbReference>
<dbReference type="EMBL" id="CH471065">
    <property type="protein sequence ID" value="EAW67376.1"/>
    <property type="molecule type" value="Genomic_DNA"/>
</dbReference>
<dbReference type="EMBL" id="BC015128">
    <property type="protein sequence ID" value="AAH15128.1"/>
    <property type="molecule type" value="mRNA"/>
</dbReference>
<dbReference type="EMBL" id="BC070165">
    <property type="protein sequence ID" value="AAH70165.1"/>
    <property type="molecule type" value="mRNA"/>
</dbReference>
<dbReference type="CCDS" id="CCDS8397.1"/>
<dbReference type="PIR" id="T08727">
    <property type="entry name" value="T08727"/>
</dbReference>
<dbReference type="RefSeq" id="NP_006467.4">
    <property type="nucleotide sequence ID" value="NM_006476.4"/>
</dbReference>
<dbReference type="PDB" id="8H9F">
    <property type="method" value="EM"/>
    <property type="resolution" value="2.69 A"/>
    <property type="chains" value="S=2-103"/>
</dbReference>
<dbReference type="PDB" id="8H9J">
    <property type="method" value="EM"/>
    <property type="resolution" value="3.26 A"/>
    <property type="chains" value="S=2-103"/>
</dbReference>
<dbReference type="PDB" id="8H9M">
    <property type="method" value="EM"/>
    <property type="resolution" value="3.00 A"/>
    <property type="chains" value="S=2-103"/>
</dbReference>
<dbReference type="PDB" id="8H9Q">
    <property type="method" value="EM"/>
    <property type="resolution" value="3.47 A"/>
    <property type="chains" value="S=2-103"/>
</dbReference>
<dbReference type="PDB" id="8H9S">
    <property type="method" value="EM"/>
    <property type="resolution" value="2.53 A"/>
    <property type="chains" value="S=2-103"/>
</dbReference>
<dbReference type="PDB" id="8H9T">
    <property type="method" value="EM"/>
    <property type="resolution" value="2.77 A"/>
    <property type="chains" value="S=2-103"/>
</dbReference>
<dbReference type="PDB" id="8H9U">
    <property type="method" value="EM"/>
    <property type="resolution" value="2.61 A"/>
    <property type="chains" value="S=2-103"/>
</dbReference>
<dbReference type="PDB" id="8H9V">
    <property type="method" value="EM"/>
    <property type="resolution" value="3.02 A"/>
    <property type="chains" value="S=2-103"/>
</dbReference>
<dbReference type="PDB" id="8KHF">
    <property type="method" value="EM"/>
    <property type="resolution" value="3.13 A"/>
    <property type="chains" value="S=2-103"/>
</dbReference>
<dbReference type="PDB" id="8KI3">
    <property type="method" value="EM"/>
    <property type="resolution" value="2.89 A"/>
    <property type="chains" value="S=2-103"/>
</dbReference>
<dbReference type="PDBsum" id="8H9F"/>
<dbReference type="PDBsum" id="8H9J"/>
<dbReference type="PDBsum" id="8H9M"/>
<dbReference type="PDBsum" id="8H9Q"/>
<dbReference type="PDBsum" id="8H9S"/>
<dbReference type="PDBsum" id="8H9T"/>
<dbReference type="PDBsum" id="8H9U"/>
<dbReference type="PDBsum" id="8H9V"/>
<dbReference type="PDBsum" id="8KHF"/>
<dbReference type="PDBsum" id="8KI3"/>
<dbReference type="EMDB" id="EMD-34565"/>
<dbReference type="EMDB" id="EMD-34569"/>
<dbReference type="EMDB" id="EMD-34573"/>
<dbReference type="EMDB" id="EMD-34577"/>
<dbReference type="EMDB" id="EMD-34580"/>
<dbReference type="EMDB" id="EMD-34581"/>
<dbReference type="EMDB" id="EMD-34582"/>
<dbReference type="EMDB" id="EMD-34583"/>
<dbReference type="EMDB" id="EMD-37243"/>
<dbReference type="EMDB" id="EMD-37251"/>
<dbReference type="SMR" id="O75964"/>
<dbReference type="BioGRID" id="115876">
    <property type="interactions" value="167"/>
</dbReference>
<dbReference type="ComplexPortal" id="CPX-6151">
    <property type="entry name" value="Mitochondrial proton-transporting ATP synthase complex"/>
</dbReference>
<dbReference type="CORUM" id="O75964"/>
<dbReference type="FunCoup" id="O75964">
    <property type="interactions" value="1354"/>
</dbReference>
<dbReference type="IntAct" id="O75964">
    <property type="interactions" value="73"/>
</dbReference>
<dbReference type="MINT" id="O75964"/>
<dbReference type="STRING" id="9606.ENSP00000300688"/>
<dbReference type="DrugBank" id="DB11638">
    <property type="generic name" value="Artenimol"/>
</dbReference>
<dbReference type="DrugBank" id="DB12695">
    <property type="generic name" value="Phenethyl Isothiocyanate"/>
</dbReference>
<dbReference type="TCDB" id="3.A.2.1.15">
    <property type="family name" value="the h+- or na+-translocating f-type, v-type and a-type atpase (f-atpase) superfamily"/>
</dbReference>
<dbReference type="CarbonylDB" id="O75964"/>
<dbReference type="GlyGen" id="O75964">
    <property type="glycosylation" value="1 site"/>
</dbReference>
<dbReference type="iPTMnet" id="O75964"/>
<dbReference type="PhosphoSitePlus" id="O75964"/>
<dbReference type="SwissPalm" id="O75964"/>
<dbReference type="BioMuta" id="ATP5L"/>
<dbReference type="jPOST" id="O75964"/>
<dbReference type="MassIVE" id="O75964"/>
<dbReference type="PaxDb" id="9606-ENSP00000300688"/>
<dbReference type="PeptideAtlas" id="O75964"/>
<dbReference type="ProteomicsDB" id="50328"/>
<dbReference type="Pumba" id="O75964"/>
<dbReference type="TopDownProteomics" id="O75964"/>
<dbReference type="Antibodypedia" id="45792">
    <property type="antibodies" value="63 antibodies from 19 providers"/>
</dbReference>
<dbReference type="DNASU" id="10632"/>
<dbReference type="Ensembl" id="ENST00000300688.8">
    <property type="protein sequence ID" value="ENSP00000300688.3"/>
    <property type="gene ID" value="ENSG00000167283.9"/>
</dbReference>
<dbReference type="GeneID" id="10632"/>
<dbReference type="KEGG" id="hsa:10632"/>
<dbReference type="MANE-Select" id="ENST00000300688.8">
    <property type="protein sequence ID" value="ENSP00000300688.3"/>
    <property type="RefSeq nucleotide sequence ID" value="NM_006476.5"/>
    <property type="RefSeq protein sequence ID" value="NP_006467.4"/>
</dbReference>
<dbReference type="UCSC" id="uc001psx.4">
    <property type="organism name" value="human"/>
</dbReference>
<dbReference type="AGR" id="HGNC:14247"/>
<dbReference type="CTD" id="10632"/>
<dbReference type="DisGeNET" id="10632"/>
<dbReference type="GeneCards" id="ATP5MG"/>
<dbReference type="HGNC" id="HGNC:14247">
    <property type="gene designation" value="ATP5MG"/>
</dbReference>
<dbReference type="HPA" id="ENSG00000167283">
    <property type="expression patterns" value="Low tissue specificity"/>
</dbReference>
<dbReference type="MalaCards" id="ATP5MG"/>
<dbReference type="MIM" id="617473">
    <property type="type" value="gene"/>
</dbReference>
<dbReference type="neXtProt" id="NX_O75964"/>
<dbReference type="OpenTargets" id="ENSG00000167283"/>
<dbReference type="PharmGKB" id="PA25143"/>
<dbReference type="VEuPathDB" id="HostDB:ENSG00000167283"/>
<dbReference type="eggNOG" id="KOG4103">
    <property type="taxonomic scope" value="Eukaryota"/>
</dbReference>
<dbReference type="GeneTree" id="ENSGT00390000009724"/>
<dbReference type="HOGENOM" id="CLU_152793_1_1_1"/>
<dbReference type="InParanoid" id="O75964"/>
<dbReference type="OMA" id="TEVCMWF"/>
<dbReference type="OrthoDB" id="437at2759"/>
<dbReference type="PAN-GO" id="O75964">
    <property type="GO annotations" value="2 GO annotations based on evolutionary models"/>
</dbReference>
<dbReference type="PhylomeDB" id="O75964"/>
<dbReference type="TreeFam" id="TF313978"/>
<dbReference type="BioCyc" id="MetaCyc:HS09535-MONOMER"/>
<dbReference type="PathwayCommons" id="O75964"/>
<dbReference type="Reactome" id="R-HSA-163210">
    <property type="pathway name" value="Formation of ATP by chemiosmotic coupling"/>
</dbReference>
<dbReference type="Reactome" id="R-HSA-8949613">
    <property type="pathway name" value="Cristae formation"/>
</dbReference>
<dbReference type="Reactome" id="R-HSA-9837999">
    <property type="pathway name" value="Mitochondrial protein degradation"/>
</dbReference>
<dbReference type="SignaLink" id="O75964"/>
<dbReference type="SIGNOR" id="O75964"/>
<dbReference type="BioGRID-ORCS" id="10632">
    <property type="hits" value="441 hits in 1120 CRISPR screens"/>
</dbReference>
<dbReference type="CD-CODE" id="FB4E32DD">
    <property type="entry name" value="Presynaptic clusters and postsynaptic densities"/>
</dbReference>
<dbReference type="ChiTaRS" id="ATP5MG">
    <property type="organism name" value="human"/>
</dbReference>
<dbReference type="GeneWiki" id="ATP5L"/>
<dbReference type="GenomeRNAi" id="10632"/>
<dbReference type="Pharos" id="O75964">
    <property type="development level" value="Tbio"/>
</dbReference>
<dbReference type="PRO" id="PR:O75964"/>
<dbReference type="Proteomes" id="UP000005640">
    <property type="component" value="Chromosome 11"/>
</dbReference>
<dbReference type="RNAct" id="O75964">
    <property type="molecule type" value="protein"/>
</dbReference>
<dbReference type="Bgee" id="ENSG00000167283">
    <property type="expression patterns" value="Expressed in ganglionic eminence and 212 other cell types or tissues"/>
</dbReference>
<dbReference type="ExpressionAtlas" id="O75964">
    <property type="expression patterns" value="baseline and differential"/>
</dbReference>
<dbReference type="GO" id="GO:0005743">
    <property type="term" value="C:mitochondrial inner membrane"/>
    <property type="evidence" value="ECO:0000304"/>
    <property type="project" value="Reactome"/>
</dbReference>
<dbReference type="GO" id="GO:0005739">
    <property type="term" value="C:mitochondrion"/>
    <property type="evidence" value="ECO:0000314"/>
    <property type="project" value="LIFEdb"/>
</dbReference>
<dbReference type="GO" id="GO:0045259">
    <property type="term" value="C:proton-transporting ATP synthase complex"/>
    <property type="evidence" value="ECO:0000314"/>
    <property type="project" value="UniProtKB"/>
</dbReference>
<dbReference type="GO" id="GO:0015078">
    <property type="term" value="F:proton transmembrane transporter activity"/>
    <property type="evidence" value="ECO:0007669"/>
    <property type="project" value="InterPro"/>
</dbReference>
<dbReference type="GO" id="GO:0015986">
    <property type="term" value="P:proton motive force-driven ATP synthesis"/>
    <property type="evidence" value="ECO:0000318"/>
    <property type="project" value="GO_Central"/>
</dbReference>
<dbReference type="GO" id="GO:0042776">
    <property type="term" value="P:proton motive force-driven mitochondrial ATP synthesis"/>
    <property type="evidence" value="ECO:0000314"/>
    <property type="project" value="UniProtKB"/>
</dbReference>
<dbReference type="InterPro" id="IPR006808">
    <property type="entry name" value="ATP_synth_F0_gsu_mt"/>
</dbReference>
<dbReference type="InterPro" id="IPR016702">
    <property type="entry name" value="ATP_synth_su_G_mt_met"/>
</dbReference>
<dbReference type="PANTHER" id="PTHR12386">
    <property type="entry name" value="ATP SYNTHASE SUBUNIT"/>
    <property type="match status" value="1"/>
</dbReference>
<dbReference type="Pfam" id="PF04718">
    <property type="entry name" value="ATP-synt_G"/>
    <property type="match status" value="1"/>
</dbReference>
<dbReference type="PIRSF" id="PIRSF017835">
    <property type="entry name" value="ATP-synth_g_mitoch_animal"/>
    <property type="match status" value="1"/>
</dbReference>
<comment type="function">
    <text evidence="1 3 5">Subunit g, of the mitochondrial membrane ATP synthase complex (F(1)F(0) ATP synthase or Complex V) that produces ATP from ADP in the presence of a proton gradient across the membrane which is generated by electron transport complexes of the respiratory chain (PubMed:37244256). ATP synthase complex consist of a soluble F(1) head domain - the catalytic core - and a membrane F(1) domain - the membrane proton channel (PubMed:37244256). These two domains are linked by a central stalk rotating inside the F(1) region and a stationary peripheral stalk (PubMed:37244256). During catalysis, ATP synthesis in the catalytic domain of F(1) is coupled via a rotary mechanism of the central stalk subunits to proton translocation (Probable). In vivo, can only synthesize ATP although its ATP hydrolase activity can be activated artificially in vitro (By similarity). Part of the complex F(0) domain (PubMed:37244256).</text>
</comment>
<comment type="subunit">
    <text evidence="3">Component of the ATP synthase complex composed at least of ATP5F1A/subunit alpha, ATP5F1B/subunit beta, ATP5MC1/subunit c (homooctomer), MT-ATP6/subunit a, MT-ATP8/subunit 8, ATP5ME/subunit e, ATP5MF/subunit f, ATP5MG/subunit g, ATP5MK/subunit k, ATP5MJ/subunit j, ATP5F1C/subunit gamma, ATP5F1D/subunit delta, ATP5F1E/subunit epsilon, ATP5PF/subunit F6, ATP5PB/subunit b, ATP5PD/subunit d, ATP5PO/subunit OSCP (PubMed:37244256). ATP synthase complex consists of a soluble F(1) head domain (subunits alpha(3) and beta(3)) - the catalytic core - and a membrane F(0) domain - the membrane proton channel (subunits c, a, 8, e, f, g, k and j) (PubMed:37244256). These two domains are linked by a central stalk (subunits gamma, delta, and epsilon) rotating inside the F1 region and a stationary peripheral stalk (subunits F6, b, d, and OSCP) (PubMed:37244256).</text>
</comment>
<comment type="interaction">
    <interactant intactId="EBI-1044001">
        <id>O75964</id>
    </interactant>
    <interactant intactId="EBI-21591415">
        <id>P13473-2</id>
        <label>LAMP2</label>
    </interactant>
    <organismsDiffer>false</organismsDiffer>
    <experiments>3</experiments>
</comment>
<comment type="interaction">
    <interactant intactId="EBI-1044001">
        <id>O75964</id>
    </interactant>
    <interactant intactId="EBI-2623095">
        <id>Q9Y371</id>
        <label>SH3GLB1</label>
    </interactant>
    <organismsDiffer>false</organismsDiffer>
    <experiments>3</experiments>
</comment>
<comment type="interaction">
    <interactant intactId="EBI-1044001">
        <id>O75964</id>
    </interactant>
    <interactant intactId="EBI-8602056">
        <id>Q8WW59</id>
        <label>SPRYD4</label>
    </interactant>
    <organismsDiffer>false</organismsDiffer>
    <experiments>2</experiments>
</comment>
<comment type="subcellular location">
    <subcellularLocation>
        <location>Mitochondrion</location>
    </subcellularLocation>
    <subcellularLocation>
        <location>Mitochondrion inner membrane</location>
    </subcellularLocation>
</comment>
<comment type="similarity">
    <text evidence="4">Belongs to the ATPase g subunit family.</text>
</comment>